<organism>
    <name type="scientific">Ligilactobacillus salivarius (strain UCC118)</name>
    <name type="common">Lactobacillus salivarius</name>
    <dbReference type="NCBI Taxonomy" id="362948"/>
    <lineage>
        <taxon>Bacteria</taxon>
        <taxon>Bacillati</taxon>
        <taxon>Bacillota</taxon>
        <taxon>Bacilli</taxon>
        <taxon>Lactobacillales</taxon>
        <taxon>Lactobacillaceae</taxon>
        <taxon>Ligilactobacillus</taxon>
    </lineage>
</organism>
<feature type="chain" id="PRO_1000084617" description="tRNA pseudouridine synthase B">
    <location>
        <begin position="1"/>
        <end position="302"/>
    </location>
</feature>
<feature type="active site" description="Nucleophile" evidence="1">
    <location>
        <position position="38"/>
    </location>
</feature>
<gene>
    <name evidence="1" type="primary">truB</name>
    <name type="ordered locus">LSL_0574</name>
</gene>
<evidence type="ECO:0000255" key="1">
    <source>
        <dbReference type="HAMAP-Rule" id="MF_01080"/>
    </source>
</evidence>
<comment type="function">
    <text evidence="1">Responsible for synthesis of pseudouridine from uracil-55 in the psi GC loop of transfer RNAs.</text>
</comment>
<comment type="catalytic activity">
    <reaction evidence="1">
        <text>uridine(55) in tRNA = pseudouridine(55) in tRNA</text>
        <dbReference type="Rhea" id="RHEA:42532"/>
        <dbReference type="Rhea" id="RHEA-COMP:10101"/>
        <dbReference type="Rhea" id="RHEA-COMP:10102"/>
        <dbReference type="ChEBI" id="CHEBI:65314"/>
        <dbReference type="ChEBI" id="CHEBI:65315"/>
        <dbReference type="EC" id="5.4.99.25"/>
    </reaction>
</comment>
<comment type="similarity">
    <text evidence="1">Belongs to the pseudouridine synthase TruB family. Type 1 subfamily.</text>
</comment>
<reference key="1">
    <citation type="journal article" date="2006" name="Proc. Natl. Acad. Sci. U.S.A.">
        <title>Multireplicon genome architecture of Lactobacillus salivarius.</title>
        <authorList>
            <person name="Claesson M.J."/>
            <person name="Li Y."/>
            <person name="Leahy S."/>
            <person name="Canchaya C."/>
            <person name="van Pijkeren J.P."/>
            <person name="Cerdeno-Tarraga A.M."/>
            <person name="Parkhill J."/>
            <person name="Flynn S."/>
            <person name="O'Sullivan G.C."/>
            <person name="Collins J.K."/>
            <person name="Higgins D."/>
            <person name="Shanahan F."/>
            <person name="Fitzgerald G.F."/>
            <person name="van Sinderen D."/>
            <person name="O'Toole P.W."/>
        </authorList>
    </citation>
    <scope>NUCLEOTIDE SEQUENCE [LARGE SCALE GENOMIC DNA]</scope>
    <source>
        <strain>UCC118</strain>
    </source>
</reference>
<protein>
    <recommendedName>
        <fullName evidence="1">tRNA pseudouridine synthase B</fullName>
        <ecNumber evidence="1">5.4.99.25</ecNumber>
    </recommendedName>
    <alternativeName>
        <fullName evidence="1">tRNA pseudouridine(55) synthase</fullName>
        <shortName evidence="1">Psi55 synthase</shortName>
    </alternativeName>
    <alternativeName>
        <fullName evidence="1">tRNA pseudouridylate synthase</fullName>
    </alternativeName>
    <alternativeName>
        <fullName evidence="1">tRNA-uridine isomerase</fullName>
    </alternativeName>
</protein>
<dbReference type="EC" id="5.4.99.25" evidence="1"/>
<dbReference type="EMBL" id="CP000233">
    <property type="protein sequence ID" value="ABD99383.1"/>
    <property type="molecule type" value="Genomic_DNA"/>
</dbReference>
<dbReference type="RefSeq" id="WP_011475825.1">
    <property type="nucleotide sequence ID" value="NC_007929.1"/>
</dbReference>
<dbReference type="RefSeq" id="YP_535466.1">
    <property type="nucleotide sequence ID" value="NC_007929.1"/>
</dbReference>
<dbReference type="SMR" id="Q1WUF2"/>
<dbReference type="STRING" id="362948.LSL_0574"/>
<dbReference type="KEGG" id="lsl:LSL_0574"/>
<dbReference type="PATRIC" id="fig|362948.14.peg.653"/>
<dbReference type="HOGENOM" id="CLU_032087_0_1_9"/>
<dbReference type="OrthoDB" id="9802309at2"/>
<dbReference type="Proteomes" id="UP000006559">
    <property type="component" value="Chromosome"/>
</dbReference>
<dbReference type="GO" id="GO:0003723">
    <property type="term" value="F:RNA binding"/>
    <property type="evidence" value="ECO:0007669"/>
    <property type="project" value="InterPro"/>
</dbReference>
<dbReference type="GO" id="GO:0160148">
    <property type="term" value="F:tRNA pseudouridine(55) synthase activity"/>
    <property type="evidence" value="ECO:0007669"/>
    <property type="project" value="UniProtKB-EC"/>
</dbReference>
<dbReference type="GO" id="GO:1990481">
    <property type="term" value="P:mRNA pseudouridine synthesis"/>
    <property type="evidence" value="ECO:0007669"/>
    <property type="project" value="TreeGrafter"/>
</dbReference>
<dbReference type="GO" id="GO:0031119">
    <property type="term" value="P:tRNA pseudouridine synthesis"/>
    <property type="evidence" value="ECO:0007669"/>
    <property type="project" value="UniProtKB-UniRule"/>
</dbReference>
<dbReference type="CDD" id="cd02573">
    <property type="entry name" value="PseudoU_synth_EcTruB"/>
    <property type="match status" value="1"/>
</dbReference>
<dbReference type="FunFam" id="3.30.2350.10:FF:000011">
    <property type="entry name" value="tRNA pseudouridine synthase B"/>
    <property type="match status" value="1"/>
</dbReference>
<dbReference type="Gene3D" id="3.30.2350.10">
    <property type="entry name" value="Pseudouridine synthase"/>
    <property type="match status" value="1"/>
</dbReference>
<dbReference type="HAMAP" id="MF_01080">
    <property type="entry name" value="TruB_bact"/>
    <property type="match status" value="1"/>
</dbReference>
<dbReference type="InterPro" id="IPR020103">
    <property type="entry name" value="PsdUridine_synth_cat_dom_sf"/>
</dbReference>
<dbReference type="InterPro" id="IPR002501">
    <property type="entry name" value="PsdUridine_synth_N"/>
</dbReference>
<dbReference type="InterPro" id="IPR014780">
    <property type="entry name" value="tRNA_psdUridine_synth_TruB"/>
</dbReference>
<dbReference type="InterPro" id="IPR032819">
    <property type="entry name" value="TruB_C"/>
</dbReference>
<dbReference type="NCBIfam" id="TIGR00431">
    <property type="entry name" value="TruB"/>
    <property type="match status" value="1"/>
</dbReference>
<dbReference type="PANTHER" id="PTHR13767:SF2">
    <property type="entry name" value="PSEUDOURIDYLATE SYNTHASE TRUB1"/>
    <property type="match status" value="1"/>
</dbReference>
<dbReference type="PANTHER" id="PTHR13767">
    <property type="entry name" value="TRNA-PSEUDOURIDINE SYNTHASE"/>
    <property type="match status" value="1"/>
</dbReference>
<dbReference type="Pfam" id="PF16198">
    <property type="entry name" value="TruB_C_2"/>
    <property type="match status" value="1"/>
</dbReference>
<dbReference type="Pfam" id="PF01509">
    <property type="entry name" value="TruB_N"/>
    <property type="match status" value="1"/>
</dbReference>
<dbReference type="SUPFAM" id="SSF55120">
    <property type="entry name" value="Pseudouridine synthase"/>
    <property type="match status" value="1"/>
</dbReference>
<sequence>MDGILPLYKERGMTSNDAVIKCRKIFKTRKIGHSGTLDPEVDGVLPICVGKATKVVNYLMDSGKVYKGEITLGFATTTEDLEGEVISKVKLSEPFSDEKINEILSSFIGDIIQVPPIYSAIKVNGKKLYEYARAGEKVDIPERRVHIEYFKQIFPSKFDKEKGQQTIYFEVGCGKGTYVRTLAVDVGKKLGVPAVMSDLTRLKSGGFQIGMAKSLSQLEKLAHENKLSESLYPIDYAVKDLPRYDLKLEQWRIVKNGGFLSVNTFKEDYDRVNLFYDDRIRCIYQYNKEKNRYQSERMIDLS</sequence>
<keyword id="KW-0413">Isomerase</keyword>
<keyword id="KW-1185">Reference proteome</keyword>
<keyword id="KW-0819">tRNA processing</keyword>
<accession>Q1WUF2</accession>
<name>TRUB_LIGS1</name>
<proteinExistence type="inferred from homology"/>